<evidence type="ECO:0000255" key="1">
    <source>
        <dbReference type="HAMAP-Rule" id="MF_01211"/>
    </source>
</evidence>
<accession>B7IUP5</accession>
<name>PYRK_BACC2</name>
<comment type="function">
    <text evidence="1">Responsible for channeling the electrons from the oxidation of dihydroorotate from the FMN redox center in the PyrD type B subunit to the ultimate electron acceptor NAD(+).</text>
</comment>
<comment type="cofactor">
    <cofactor evidence="1">
        <name>[2Fe-2S] cluster</name>
        <dbReference type="ChEBI" id="CHEBI:190135"/>
    </cofactor>
    <text evidence="1">Binds 1 [2Fe-2S] cluster per subunit.</text>
</comment>
<comment type="cofactor">
    <cofactor evidence="1">
        <name>FAD</name>
        <dbReference type="ChEBI" id="CHEBI:57692"/>
    </cofactor>
    <text evidence="1">Binds 1 FAD per subunit.</text>
</comment>
<comment type="pathway">
    <text evidence="1">Pyrimidine metabolism; UMP biosynthesis via de novo pathway; orotate from (S)-dihydroorotate (NAD(+) route): step 1/1.</text>
</comment>
<comment type="subunit">
    <text evidence="1">Heterotetramer of 2 PyrK and 2 PyrD type B subunits.</text>
</comment>
<comment type="similarity">
    <text evidence="1">Belongs to the PyrK family.</text>
</comment>
<keyword id="KW-0001">2Fe-2S</keyword>
<keyword id="KW-0249">Electron transport</keyword>
<keyword id="KW-0274">FAD</keyword>
<keyword id="KW-0285">Flavoprotein</keyword>
<keyword id="KW-0408">Iron</keyword>
<keyword id="KW-0411">Iron-sulfur</keyword>
<keyword id="KW-0479">Metal-binding</keyword>
<keyword id="KW-0665">Pyrimidine biosynthesis</keyword>
<keyword id="KW-0813">Transport</keyword>
<feature type="chain" id="PRO_1000138907" description="Dihydroorotate dehydrogenase B (NAD(+)), electron transfer subunit">
    <location>
        <begin position="1"/>
        <end position="259"/>
    </location>
</feature>
<feature type="domain" description="FAD-binding FR-type" evidence="1">
    <location>
        <begin position="2"/>
        <end position="102"/>
    </location>
</feature>
<feature type="binding site" evidence="1">
    <location>
        <begin position="53"/>
        <end position="56"/>
    </location>
    <ligand>
        <name>FAD</name>
        <dbReference type="ChEBI" id="CHEBI:57692"/>
    </ligand>
</feature>
<feature type="binding site" evidence="1">
    <location>
        <begin position="70"/>
        <end position="72"/>
    </location>
    <ligand>
        <name>FAD</name>
        <dbReference type="ChEBI" id="CHEBI:57692"/>
    </ligand>
</feature>
<feature type="binding site" evidence="1">
    <location>
        <begin position="77"/>
        <end position="78"/>
    </location>
    <ligand>
        <name>FAD</name>
        <dbReference type="ChEBI" id="CHEBI:57692"/>
    </ligand>
</feature>
<feature type="binding site" evidence="1">
    <location>
        <position position="221"/>
    </location>
    <ligand>
        <name>[2Fe-2S] cluster</name>
        <dbReference type="ChEBI" id="CHEBI:190135"/>
    </ligand>
</feature>
<feature type="binding site" evidence="1">
    <location>
        <position position="226"/>
    </location>
    <ligand>
        <name>[2Fe-2S] cluster</name>
        <dbReference type="ChEBI" id="CHEBI:190135"/>
    </ligand>
</feature>
<feature type="binding site" evidence="1">
    <location>
        <position position="229"/>
    </location>
    <ligand>
        <name>[2Fe-2S] cluster</name>
        <dbReference type="ChEBI" id="CHEBI:190135"/>
    </ligand>
</feature>
<feature type="binding site" evidence="1">
    <location>
        <position position="246"/>
    </location>
    <ligand>
        <name>[2Fe-2S] cluster</name>
        <dbReference type="ChEBI" id="CHEBI:190135"/>
    </ligand>
</feature>
<protein>
    <recommendedName>
        <fullName evidence="1">Dihydroorotate dehydrogenase B (NAD(+)), electron transfer subunit</fullName>
    </recommendedName>
    <alternativeName>
        <fullName evidence="1">Dihydroorotate oxidase B, electron transfer subunit</fullName>
    </alternativeName>
</protein>
<organism>
    <name type="scientific">Bacillus cereus (strain G9842)</name>
    <dbReference type="NCBI Taxonomy" id="405531"/>
    <lineage>
        <taxon>Bacteria</taxon>
        <taxon>Bacillati</taxon>
        <taxon>Bacillota</taxon>
        <taxon>Bacilli</taxon>
        <taxon>Bacillales</taxon>
        <taxon>Bacillaceae</taxon>
        <taxon>Bacillus</taxon>
        <taxon>Bacillus cereus group</taxon>
    </lineage>
</organism>
<gene>
    <name evidence="1" type="primary">pyrK</name>
    <name type="ordered locus">BCG9842_B1258</name>
</gene>
<sequence>MMQKQNMIVVNQKEIAKNIYELVLQGTLVQQMNEPGQFVHIKVAEGIAPLLRRPISICNVDQEKNEFTMLYRAEGQGTKTLATRKQGEMIDVLGPLGHGFPVEEAEAGQTALLVGGGIGVPPLYELSQRLVAKGVRVIHILGFQTKDVVFYEEKFAELGDTYVATVDGTHGTKGFVTDVIDNYGIDFDILYSCGPLAMLRALEGRYKEKKAYISLEERMGCGIGACFACVCHLQEDPSGHSYKKVCSDGPVFPIGEVVL</sequence>
<reference key="1">
    <citation type="submission" date="2008-10" db="EMBL/GenBank/DDBJ databases">
        <title>Genome sequence of Bacillus cereus G9842.</title>
        <authorList>
            <person name="Dodson R.J."/>
            <person name="Durkin A.S."/>
            <person name="Rosovitz M.J."/>
            <person name="Rasko D.A."/>
            <person name="Hoffmaster A."/>
            <person name="Ravel J."/>
            <person name="Sutton G."/>
        </authorList>
    </citation>
    <scope>NUCLEOTIDE SEQUENCE [LARGE SCALE GENOMIC DNA]</scope>
    <source>
        <strain>G9842</strain>
    </source>
</reference>
<proteinExistence type="inferred from homology"/>
<dbReference type="EMBL" id="CP001186">
    <property type="protein sequence ID" value="ACK96366.1"/>
    <property type="molecule type" value="Genomic_DNA"/>
</dbReference>
<dbReference type="RefSeq" id="WP_000983354.1">
    <property type="nucleotide sequence ID" value="NC_011772.1"/>
</dbReference>
<dbReference type="SMR" id="B7IUP5"/>
<dbReference type="KEGG" id="bcg:BCG9842_B1258"/>
<dbReference type="HOGENOM" id="CLU_003827_1_2_9"/>
<dbReference type="UniPathway" id="UPA00070">
    <property type="reaction ID" value="UER00945"/>
</dbReference>
<dbReference type="Proteomes" id="UP000006744">
    <property type="component" value="Chromosome"/>
</dbReference>
<dbReference type="GO" id="GO:0051537">
    <property type="term" value="F:2 iron, 2 sulfur cluster binding"/>
    <property type="evidence" value="ECO:0007669"/>
    <property type="project" value="UniProtKB-KW"/>
</dbReference>
<dbReference type="GO" id="GO:0009055">
    <property type="term" value="F:electron transfer activity"/>
    <property type="evidence" value="ECO:0007669"/>
    <property type="project" value="UniProtKB-UniRule"/>
</dbReference>
<dbReference type="GO" id="GO:0050660">
    <property type="term" value="F:flavin adenine dinucleotide binding"/>
    <property type="evidence" value="ECO:0007669"/>
    <property type="project" value="InterPro"/>
</dbReference>
<dbReference type="GO" id="GO:0046872">
    <property type="term" value="F:metal ion binding"/>
    <property type="evidence" value="ECO:0007669"/>
    <property type="project" value="UniProtKB-KW"/>
</dbReference>
<dbReference type="GO" id="GO:0016491">
    <property type="term" value="F:oxidoreductase activity"/>
    <property type="evidence" value="ECO:0007669"/>
    <property type="project" value="InterPro"/>
</dbReference>
<dbReference type="GO" id="GO:0044205">
    <property type="term" value="P:'de novo' UMP biosynthetic process"/>
    <property type="evidence" value="ECO:0007669"/>
    <property type="project" value="UniProtKB-UniRule"/>
</dbReference>
<dbReference type="CDD" id="cd06218">
    <property type="entry name" value="DHOD_e_trans"/>
    <property type="match status" value="1"/>
</dbReference>
<dbReference type="FunFam" id="2.10.240.10:FF:000001">
    <property type="entry name" value="Dihydroorotate dehydrogenase B (NAD(+)), electron transfer subunit"/>
    <property type="match status" value="1"/>
</dbReference>
<dbReference type="FunFam" id="2.40.30.10:FF:000045">
    <property type="entry name" value="Dihydroorotate dehydrogenase B (NAD(+)), electron transfer subunit"/>
    <property type="match status" value="1"/>
</dbReference>
<dbReference type="FunFam" id="3.40.50.80:FF:000017">
    <property type="entry name" value="Dihydroorotate dehydrogenase B (NAD(+)), electron transfer subunit"/>
    <property type="match status" value="1"/>
</dbReference>
<dbReference type="Gene3D" id="2.10.240.10">
    <property type="entry name" value="Dihydroorotate dehydrogenase, electron transfer subunit"/>
    <property type="match status" value="1"/>
</dbReference>
<dbReference type="Gene3D" id="3.40.50.80">
    <property type="entry name" value="Nucleotide-binding domain of ferredoxin-NADP reductase (FNR) module"/>
    <property type="match status" value="1"/>
</dbReference>
<dbReference type="Gene3D" id="2.40.30.10">
    <property type="entry name" value="Translation factors"/>
    <property type="match status" value="1"/>
</dbReference>
<dbReference type="HAMAP" id="MF_01211">
    <property type="entry name" value="DHODB_Fe_S_bind"/>
    <property type="match status" value="1"/>
</dbReference>
<dbReference type="InterPro" id="IPR008333">
    <property type="entry name" value="Cbr1-like_FAD-bd_dom"/>
</dbReference>
<dbReference type="InterPro" id="IPR012165">
    <property type="entry name" value="Cyt_c3_hydrogenase_gsu"/>
</dbReference>
<dbReference type="InterPro" id="IPR037117">
    <property type="entry name" value="Dihydroorotate_DH_ele_sf"/>
</dbReference>
<dbReference type="InterPro" id="IPR019480">
    <property type="entry name" value="Dihydroorotate_DH_Fe-S-bd"/>
</dbReference>
<dbReference type="InterPro" id="IPR023455">
    <property type="entry name" value="Dihydroorotate_DHASE_ETsu"/>
</dbReference>
<dbReference type="InterPro" id="IPR017927">
    <property type="entry name" value="FAD-bd_FR_type"/>
</dbReference>
<dbReference type="InterPro" id="IPR039261">
    <property type="entry name" value="FNR_nucleotide-bd"/>
</dbReference>
<dbReference type="InterPro" id="IPR001433">
    <property type="entry name" value="OxRdtase_FAD/NAD-bd"/>
</dbReference>
<dbReference type="InterPro" id="IPR050353">
    <property type="entry name" value="PyrK_electron_transfer"/>
</dbReference>
<dbReference type="InterPro" id="IPR017938">
    <property type="entry name" value="Riboflavin_synthase-like_b-brl"/>
</dbReference>
<dbReference type="NCBIfam" id="NF000797">
    <property type="entry name" value="PRK00054.1-2"/>
    <property type="match status" value="1"/>
</dbReference>
<dbReference type="NCBIfam" id="NF000799">
    <property type="entry name" value="PRK00054.1-4"/>
    <property type="match status" value="1"/>
</dbReference>
<dbReference type="PANTHER" id="PTHR43513">
    <property type="entry name" value="DIHYDROOROTATE DEHYDROGENASE B (NAD(+)), ELECTRON TRANSFER SUBUNIT"/>
    <property type="match status" value="1"/>
</dbReference>
<dbReference type="PANTHER" id="PTHR43513:SF3">
    <property type="entry name" value="DIHYDROOROTATE DEHYDROGENASE B (NAD(+)), ELECTRON TRANSFER SUBUNIT-RELATED"/>
    <property type="match status" value="1"/>
</dbReference>
<dbReference type="Pfam" id="PF10418">
    <property type="entry name" value="DHODB_Fe-S_bind"/>
    <property type="match status" value="1"/>
</dbReference>
<dbReference type="Pfam" id="PF00970">
    <property type="entry name" value="FAD_binding_6"/>
    <property type="match status" value="1"/>
</dbReference>
<dbReference type="Pfam" id="PF00175">
    <property type="entry name" value="NAD_binding_1"/>
    <property type="match status" value="1"/>
</dbReference>
<dbReference type="PIRSF" id="PIRSF006816">
    <property type="entry name" value="Cyc3_hyd_g"/>
    <property type="match status" value="1"/>
</dbReference>
<dbReference type="PRINTS" id="PR00409">
    <property type="entry name" value="PHDIOXRDTASE"/>
</dbReference>
<dbReference type="SUPFAM" id="SSF52343">
    <property type="entry name" value="Ferredoxin reductase-like, C-terminal NADP-linked domain"/>
    <property type="match status" value="1"/>
</dbReference>
<dbReference type="SUPFAM" id="SSF63380">
    <property type="entry name" value="Riboflavin synthase domain-like"/>
    <property type="match status" value="1"/>
</dbReference>
<dbReference type="PROSITE" id="PS51384">
    <property type="entry name" value="FAD_FR"/>
    <property type="match status" value="1"/>
</dbReference>